<sequence>MANYSTSEFKSGLKVMLDGDPCSIIENEFVKPGKGQAFSRVKLRNLRNGKVWERTFKSGDSLEGADVMDVSMQYIYSDGEFWHFMDQTSFEQKQADETAVRDAKQWLKEEDICEVTLYNGEPLSVSPPNFVELEIIETDPGLKGDTAGTGGKPATLSTGAVVRVPLFVQTGEIVKVDTRTGDYVGRIKQ</sequence>
<keyword id="KW-0963">Cytoplasm</keyword>
<keyword id="KW-0251">Elongation factor</keyword>
<keyword id="KW-0379">Hydroxylation</keyword>
<keyword id="KW-0648">Protein biosynthesis</keyword>
<keyword id="KW-1185">Reference proteome</keyword>
<name>EFP_ALCBS</name>
<evidence type="ECO:0000255" key="1">
    <source>
        <dbReference type="HAMAP-Rule" id="MF_00141"/>
    </source>
</evidence>
<accession>Q0VLQ4</accession>
<feature type="chain" id="PRO_1000010673" description="Elongation factor P">
    <location>
        <begin position="1"/>
        <end position="189"/>
    </location>
</feature>
<feature type="modified residue" description="N6-(3,6-diaminohexanoyl)-5-hydroxylysine" evidence="1">
    <location>
        <position position="34"/>
    </location>
</feature>
<reference key="1">
    <citation type="journal article" date="2006" name="Nat. Biotechnol.">
        <title>Genome sequence of the ubiquitous hydrocarbon-degrading marine bacterium Alcanivorax borkumensis.</title>
        <authorList>
            <person name="Schneiker S."/>
            <person name="Martins dos Santos V.A.P."/>
            <person name="Bartels D."/>
            <person name="Bekel T."/>
            <person name="Brecht M."/>
            <person name="Buhrmester J."/>
            <person name="Chernikova T.N."/>
            <person name="Denaro R."/>
            <person name="Ferrer M."/>
            <person name="Gertler C."/>
            <person name="Goesmann A."/>
            <person name="Golyshina O.V."/>
            <person name="Kaminski F."/>
            <person name="Khachane A.N."/>
            <person name="Lang S."/>
            <person name="Linke B."/>
            <person name="McHardy A.C."/>
            <person name="Meyer F."/>
            <person name="Nechitaylo T."/>
            <person name="Puehler A."/>
            <person name="Regenhardt D."/>
            <person name="Rupp O."/>
            <person name="Sabirova J.S."/>
            <person name="Selbitschka W."/>
            <person name="Yakimov M.M."/>
            <person name="Timmis K.N."/>
            <person name="Vorhoelter F.-J."/>
            <person name="Weidner S."/>
            <person name="Kaiser O."/>
            <person name="Golyshin P.N."/>
        </authorList>
    </citation>
    <scope>NUCLEOTIDE SEQUENCE [LARGE SCALE GENOMIC DNA]</scope>
    <source>
        <strain>ATCC 700651 / DSM 11573 / NCIMB 13689 / SK2</strain>
    </source>
</reference>
<proteinExistence type="inferred from homology"/>
<dbReference type="EMBL" id="AM286690">
    <property type="protein sequence ID" value="CAL17894.1"/>
    <property type="molecule type" value="Genomic_DNA"/>
</dbReference>
<dbReference type="RefSeq" id="WP_011589720.1">
    <property type="nucleotide sequence ID" value="NC_008260.1"/>
</dbReference>
<dbReference type="SMR" id="Q0VLQ4"/>
<dbReference type="STRING" id="393595.ABO_2446"/>
<dbReference type="KEGG" id="abo:ABO_2446"/>
<dbReference type="eggNOG" id="COG0231">
    <property type="taxonomic scope" value="Bacteria"/>
</dbReference>
<dbReference type="HOGENOM" id="CLU_074944_0_0_6"/>
<dbReference type="OrthoDB" id="9801844at2"/>
<dbReference type="UniPathway" id="UPA00345"/>
<dbReference type="Proteomes" id="UP000008871">
    <property type="component" value="Chromosome"/>
</dbReference>
<dbReference type="GO" id="GO:0005737">
    <property type="term" value="C:cytoplasm"/>
    <property type="evidence" value="ECO:0007669"/>
    <property type="project" value="UniProtKB-SubCell"/>
</dbReference>
<dbReference type="GO" id="GO:0003746">
    <property type="term" value="F:translation elongation factor activity"/>
    <property type="evidence" value="ECO:0007669"/>
    <property type="project" value="UniProtKB-UniRule"/>
</dbReference>
<dbReference type="GO" id="GO:0043043">
    <property type="term" value="P:peptide biosynthetic process"/>
    <property type="evidence" value="ECO:0007669"/>
    <property type="project" value="InterPro"/>
</dbReference>
<dbReference type="CDD" id="cd04470">
    <property type="entry name" value="S1_EF-P_repeat_1"/>
    <property type="match status" value="1"/>
</dbReference>
<dbReference type="CDD" id="cd05794">
    <property type="entry name" value="S1_EF-P_repeat_2"/>
    <property type="match status" value="1"/>
</dbReference>
<dbReference type="FunFam" id="2.30.30.30:FF:000003">
    <property type="entry name" value="Elongation factor P"/>
    <property type="match status" value="1"/>
</dbReference>
<dbReference type="FunFam" id="2.40.50.140:FF:000004">
    <property type="entry name" value="Elongation factor P"/>
    <property type="match status" value="1"/>
</dbReference>
<dbReference type="FunFam" id="2.40.50.140:FF:000009">
    <property type="entry name" value="Elongation factor P"/>
    <property type="match status" value="1"/>
</dbReference>
<dbReference type="Gene3D" id="2.30.30.30">
    <property type="match status" value="1"/>
</dbReference>
<dbReference type="Gene3D" id="2.40.50.140">
    <property type="entry name" value="Nucleic acid-binding proteins"/>
    <property type="match status" value="2"/>
</dbReference>
<dbReference type="HAMAP" id="MF_00141">
    <property type="entry name" value="EF_P"/>
    <property type="match status" value="1"/>
</dbReference>
<dbReference type="InterPro" id="IPR015365">
    <property type="entry name" value="Elong-fact-P_C"/>
</dbReference>
<dbReference type="InterPro" id="IPR012340">
    <property type="entry name" value="NA-bd_OB-fold"/>
</dbReference>
<dbReference type="InterPro" id="IPR014722">
    <property type="entry name" value="Rib_uL2_dom2"/>
</dbReference>
<dbReference type="InterPro" id="IPR020599">
    <property type="entry name" value="Transl_elong_fac_P/YeiP"/>
</dbReference>
<dbReference type="InterPro" id="IPR013185">
    <property type="entry name" value="Transl_elong_KOW-like"/>
</dbReference>
<dbReference type="InterPro" id="IPR001059">
    <property type="entry name" value="Transl_elong_P/YeiP_cen"/>
</dbReference>
<dbReference type="InterPro" id="IPR013852">
    <property type="entry name" value="Transl_elong_P/YeiP_CS"/>
</dbReference>
<dbReference type="InterPro" id="IPR011768">
    <property type="entry name" value="Transl_elongation_fac_P"/>
</dbReference>
<dbReference type="InterPro" id="IPR008991">
    <property type="entry name" value="Translation_prot_SH3-like_sf"/>
</dbReference>
<dbReference type="NCBIfam" id="TIGR00038">
    <property type="entry name" value="efp"/>
    <property type="match status" value="1"/>
</dbReference>
<dbReference type="NCBIfam" id="NF001810">
    <property type="entry name" value="PRK00529.1"/>
    <property type="match status" value="1"/>
</dbReference>
<dbReference type="PANTHER" id="PTHR30053">
    <property type="entry name" value="ELONGATION FACTOR P"/>
    <property type="match status" value="1"/>
</dbReference>
<dbReference type="PANTHER" id="PTHR30053:SF12">
    <property type="entry name" value="ELONGATION FACTOR P (EF-P) FAMILY PROTEIN"/>
    <property type="match status" value="1"/>
</dbReference>
<dbReference type="Pfam" id="PF01132">
    <property type="entry name" value="EFP"/>
    <property type="match status" value="1"/>
</dbReference>
<dbReference type="Pfam" id="PF08207">
    <property type="entry name" value="EFP_N"/>
    <property type="match status" value="1"/>
</dbReference>
<dbReference type="Pfam" id="PF09285">
    <property type="entry name" value="Elong-fact-P_C"/>
    <property type="match status" value="1"/>
</dbReference>
<dbReference type="PIRSF" id="PIRSF005901">
    <property type="entry name" value="EF-P"/>
    <property type="match status" value="1"/>
</dbReference>
<dbReference type="SMART" id="SM01185">
    <property type="entry name" value="EFP"/>
    <property type="match status" value="1"/>
</dbReference>
<dbReference type="SMART" id="SM00841">
    <property type="entry name" value="Elong-fact-P_C"/>
    <property type="match status" value="1"/>
</dbReference>
<dbReference type="SUPFAM" id="SSF50249">
    <property type="entry name" value="Nucleic acid-binding proteins"/>
    <property type="match status" value="2"/>
</dbReference>
<dbReference type="SUPFAM" id="SSF50104">
    <property type="entry name" value="Translation proteins SH3-like domain"/>
    <property type="match status" value="1"/>
</dbReference>
<dbReference type="PROSITE" id="PS01275">
    <property type="entry name" value="EFP"/>
    <property type="match status" value="1"/>
</dbReference>
<gene>
    <name evidence="1" type="primary">efp</name>
    <name type="ordered locus">ABO_2446</name>
</gene>
<protein>
    <recommendedName>
        <fullName evidence="1">Elongation factor P</fullName>
        <shortName evidence="1">EF-P</shortName>
    </recommendedName>
</protein>
<comment type="function">
    <text evidence="1">Involved in peptide bond synthesis. Alleviates ribosome stalling that occurs when 3 or more consecutive Pro residues or the sequence PPG is present in a protein, possibly by augmenting the peptidyl transferase activity of the ribosome. Modification of Lys-34 is required for alleviation.</text>
</comment>
<comment type="pathway">
    <text evidence="1">Protein biosynthesis; polypeptide chain elongation.</text>
</comment>
<comment type="subcellular location">
    <subcellularLocation>
        <location evidence="1">Cytoplasm</location>
    </subcellularLocation>
</comment>
<comment type="PTM">
    <text evidence="1">May be beta-lysylated on the epsilon-amino group of Lys-34 by the combined action of EpmA and EpmB, and then hydroxylated on the C5 position of the same residue by EpmC (if this protein is present). Lysylation is critical for the stimulatory effect of EF-P on peptide-bond formation. The lysylation moiety may extend toward the peptidyltransferase center and stabilize the terminal 3-CCA end of the tRNA. Hydroxylation of the C5 position on Lys-34 may allow additional potential stabilizing hydrogen-bond interactions with the P-tRNA.</text>
</comment>
<comment type="similarity">
    <text evidence="1">Belongs to the elongation factor P family.</text>
</comment>
<organism>
    <name type="scientific">Alcanivorax borkumensis (strain ATCC 700651 / DSM 11573 / NCIMB 13689 / SK2)</name>
    <dbReference type="NCBI Taxonomy" id="393595"/>
    <lineage>
        <taxon>Bacteria</taxon>
        <taxon>Pseudomonadati</taxon>
        <taxon>Pseudomonadota</taxon>
        <taxon>Gammaproteobacteria</taxon>
        <taxon>Oceanospirillales</taxon>
        <taxon>Alcanivoracaceae</taxon>
        <taxon>Alcanivorax</taxon>
    </lineage>
</organism>